<accession>Q2FZ60</accession>
<protein>
    <recommendedName>
        <fullName evidence="1">Large ribosomal subunit protein bL28</fullName>
    </recommendedName>
    <alternativeName>
        <fullName evidence="3">50S ribosomal protein L28</fullName>
    </alternativeName>
</protein>
<reference key="1">
    <citation type="book" date="2006" name="Gram positive pathogens, 2nd edition">
        <title>The Staphylococcus aureus NCTC 8325 genome.</title>
        <editorList>
            <person name="Fischetti V."/>
            <person name="Novick R."/>
            <person name="Ferretti J."/>
            <person name="Portnoy D."/>
            <person name="Rood J."/>
        </editorList>
        <authorList>
            <person name="Gillaspy A.F."/>
            <person name="Worrell V."/>
            <person name="Orvis J."/>
            <person name="Roe B.A."/>
            <person name="Dyer D.W."/>
            <person name="Iandolo J.J."/>
        </authorList>
    </citation>
    <scope>NUCLEOTIDE SEQUENCE [LARGE SCALE GENOMIC DNA]</scope>
    <source>
        <strain>NCTC 8325 / PS 47</strain>
    </source>
</reference>
<organism>
    <name type="scientific">Staphylococcus aureus (strain NCTC 8325 / PS 47)</name>
    <dbReference type="NCBI Taxonomy" id="93061"/>
    <lineage>
        <taxon>Bacteria</taxon>
        <taxon>Bacillati</taxon>
        <taxon>Bacillota</taxon>
        <taxon>Bacilli</taxon>
        <taxon>Bacillales</taxon>
        <taxon>Staphylococcaceae</taxon>
        <taxon>Staphylococcus</taxon>
    </lineage>
</organism>
<sequence length="62" mass="6977">MGKQCFVTGRKASTGNRRSHALNSTKRRWNANLQKVRILVDGKPKKVWVSARALKSGKVTRV</sequence>
<evidence type="ECO:0000255" key="1">
    <source>
        <dbReference type="HAMAP-Rule" id="MF_00373"/>
    </source>
</evidence>
<evidence type="ECO:0000256" key="2">
    <source>
        <dbReference type="SAM" id="MobiDB-lite"/>
    </source>
</evidence>
<evidence type="ECO:0000305" key="3"/>
<evidence type="ECO:0007829" key="4">
    <source>
        <dbReference type="PDB" id="6WQN"/>
    </source>
</evidence>
<evidence type="ECO:0007829" key="5">
    <source>
        <dbReference type="PDB" id="7ASM"/>
    </source>
</evidence>
<proteinExistence type="evidence at protein level"/>
<comment type="similarity">
    <text evidence="1">Belongs to the bacterial ribosomal protein bL28 family.</text>
</comment>
<keyword id="KW-0002">3D-structure</keyword>
<keyword id="KW-1185">Reference proteome</keyword>
<keyword id="KW-0687">Ribonucleoprotein</keyword>
<keyword id="KW-0689">Ribosomal protein</keyword>
<feature type="chain" id="PRO_1000007366" description="Large ribosomal subunit protein bL28">
    <location>
        <begin position="1"/>
        <end position="62"/>
    </location>
</feature>
<feature type="region of interest" description="Disordered" evidence="2">
    <location>
        <begin position="1"/>
        <end position="22"/>
    </location>
</feature>
<feature type="strand" evidence="4">
    <location>
        <begin position="6"/>
        <end position="8"/>
    </location>
</feature>
<feature type="strand" evidence="5">
    <location>
        <begin position="14"/>
        <end position="18"/>
    </location>
</feature>
<feature type="strand" evidence="5">
    <location>
        <begin position="24"/>
        <end position="28"/>
    </location>
</feature>
<feature type="strand" evidence="5">
    <location>
        <begin position="33"/>
        <end position="39"/>
    </location>
</feature>
<feature type="strand" evidence="5">
    <location>
        <begin position="41"/>
        <end position="50"/>
    </location>
</feature>
<feature type="helix" evidence="5">
    <location>
        <begin position="51"/>
        <end position="56"/>
    </location>
</feature>
<gene>
    <name evidence="1" type="primary">rpmB</name>
    <name type="ordered locus">SAOUHSC_01191</name>
</gene>
<dbReference type="EMBL" id="CP000253">
    <property type="protein sequence ID" value="ABD30298.1"/>
    <property type="molecule type" value="Genomic_DNA"/>
</dbReference>
<dbReference type="RefSeq" id="WP_000517908.1">
    <property type="nucleotide sequence ID" value="NZ_LS483365.1"/>
</dbReference>
<dbReference type="RefSeq" id="YP_499730.1">
    <property type="nucleotide sequence ID" value="NC_007795.1"/>
</dbReference>
<dbReference type="PDB" id="4WCE">
    <property type="method" value="X-ray"/>
    <property type="resolution" value="3.53 A"/>
    <property type="chains" value="U=1-62"/>
</dbReference>
<dbReference type="PDB" id="4WFA">
    <property type="method" value="X-ray"/>
    <property type="resolution" value="3.39 A"/>
    <property type="chains" value="U=1-62"/>
</dbReference>
<dbReference type="PDB" id="4WFB">
    <property type="method" value="X-ray"/>
    <property type="resolution" value="3.43 A"/>
    <property type="chains" value="U=1-62"/>
</dbReference>
<dbReference type="PDB" id="5HKV">
    <property type="method" value="X-ray"/>
    <property type="resolution" value="3.66 A"/>
    <property type="chains" value="U=1-62"/>
</dbReference>
<dbReference type="PDB" id="5HL7">
    <property type="method" value="X-ray"/>
    <property type="resolution" value="3.55 A"/>
    <property type="chains" value="U=1-62"/>
</dbReference>
<dbReference type="PDB" id="5LI0">
    <property type="method" value="EM"/>
    <property type="resolution" value="3.80 A"/>
    <property type="chains" value="0=10-55"/>
</dbReference>
<dbReference type="PDB" id="5ND8">
    <property type="method" value="EM"/>
    <property type="resolution" value="3.70 A"/>
    <property type="chains" value="0=1-62"/>
</dbReference>
<dbReference type="PDB" id="5ND9">
    <property type="method" value="EM"/>
    <property type="resolution" value="3.70 A"/>
    <property type="chains" value="0=1-62"/>
</dbReference>
<dbReference type="PDB" id="5TCU">
    <property type="method" value="EM"/>
    <property type="resolution" value="3.90 A"/>
    <property type="chains" value="LA=3-60"/>
</dbReference>
<dbReference type="PDB" id="6DDD">
    <property type="method" value="EM"/>
    <property type="resolution" value="3.10 A"/>
    <property type="chains" value="J=1-62"/>
</dbReference>
<dbReference type="PDB" id="6DDG">
    <property type="method" value="EM"/>
    <property type="resolution" value="3.10 A"/>
    <property type="chains" value="J=1-62"/>
</dbReference>
<dbReference type="PDB" id="6HMA">
    <property type="method" value="EM"/>
    <property type="resolution" value="2.65 A"/>
    <property type="chains" value="V=12-60"/>
</dbReference>
<dbReference type="PDB" id="6SJ6">
    <property type="method" value="EM"/>
    <property type="resolution" value="3.23 A"/>
    <property type="chains" value="0=1-62"/>
</dbReference>
<dbReference type="PDB" id="6WQN">
    <property type="method" value="EM"/>
    <property type="resolution" value="2.90 A"/>
    <property type="chains" value="J=1-61"/>
</dbReference>
<dbReference type="PDB" id="6WQQ">
    <property type="method" value="EM"/>
    <property type="resolution" value="3.10 A"/>
    <property type="chains" value="J=1-61"/>
</dbReference>
<dbReference type="PDB" id="6WRS">
    <property type="method" value="EM"/>
    <property type="resolution" value="3.20 A"/>
    <property type="chains" value="J=1-61"/>
</dbReference>
<dbReference type="PDB" id="6WRU">
    <property type="method" value="EM"/>
    <property type="resolution" value="3.10 A"/>
    <property type="chains" value="J=1-61"/>
</dbReference>
<dbReference type="PDB" id="6YEF">
    <property type="method" value="EM"/>
    <property type="resolution" value="3.20 A"/>
    <property type="chains" value="0=1-62"/>
</dbReference>
<dbReference type="PDB" id="7ASM">
    <property type="method" value="EM"/>
    <property type="resolution" value="2.48 A"/>
    <property type="chains" value="V=12-60"/>
</dbReference>
<dbReference type="PDB" id="7ASN">
    <property type="method" value="EM"/>
    <property type="resolution" value="2.73 A"/>
    <property type="chains" value="V=12-60"/>
</dbReference>
<dbReference type="PDB" id="7NHL">
    <property type="method" value="EM"/>
    <property type="resolution" value="3.10 A"/>
    <property type="chains" value="1=1-62"/>
</dbReference>
<dbReference type="PDB" id="7NHM">
    <property type="method" value="EM"/>
    <property type="resolution" value="3.10 A"/>
    <property type="chains" value="1=1-62"/>
</dbReference>
<dbReference type="PDB" id="7TTU">
    <property type="method" value="EM"/>
    <property type="resolution" value="3.00 A"/>
    <property type="chains" value="J=1-61"/>
</dbReference>
<dbReference type="PDB" id="7TTW">
    <property type="method" value="EM"/>
    <property type="resolution" value="2.90 A"/>
    <property type="chains" value="J=1-61"/>
</dbReference>
<dbReference type="PDB" id="8P2F">
    <property type="method" value="EM"/>
    <property type="resolution" value="2.44 A"/>
    <property type="chains" value="1=1-62"/>
</dbReference>
<dbReference type="PDB" id="8P2G">
    <property type="method" value="EM"/>
    <property type="resolution" value="2.02 A"/>
    <property type="chains" value="1=1-62"/>
</dbReference>
<dbReference type="PDB" id="8P2H">
    <property type="method" value="EM"/>
    <property type="resolution" value="2.49 A"/>
    <property type="chains" value="1=1-62"/>
</dbReference>
<dbReference type="PDBsum" id="4WCE"/>
<dbReference type="PDBsum" id="4WFA"/>
<dbReference type="PDBsum" id="4WFB"/>
<dbReference type="PDBsum" id="5HKV"/>
<dbReference type="PDBsum" id="5HL7"/>
<dbReference type="PDBsum" id="5LI0"/>
<dbReference type="PDBsum" id="5ND8"/>
<dbReference type="PDBsum" id="5ND9"/>
<dbReference type="PDBsum" id="5TCU"/>
<dbReference type="PDBsum" id="6DDD"/>
<dbReference type="PDBsum" id="6DDG"/>
<dbReference type="PDBsum" id="6HMA"/>
<dbReference type="PDBsum" id="6SJ6"/>
<dbReference type="PDBsum" id="6WQN"/>
<dbReference type="PDBsum" id="6WQQ"/>
<dbReference type="PDBsum" id="6WRS"/>
<dbReference type="PDBsum" id="6WRU"/>
<dbReference type="PDBsum" id="6YEF"/>
<dbReference type="PDBsum" id="7ASM"/>
<dbReference type="PDBsum" id="7ASN"/>
<dbReference type="PDBsum" id="7NHL"/>
<dbReference type="PDBsum" id="7NHM"/>
<dbReference type="PDBsum" id="7TTU"/>
<dbReference type="PDBsum" id="7TTW"/>
<dbReference type="PDBsum" id="8P2F"/>
<dbReference type="PDBsum" id="8P2G"/>
<dbReference type="PDBsum" id="8P2H"/>
<dbReference type="EMDB" id="EMD-10212"/>
<dbReference type="EMDB" id="EMD-10791"/>
<dbReference type="EMDB" id="EMD-12332"/>
<dbReference type="EMDB" id="EMD-12333"/>
<dbReference type="EMDB" id="EMD-17363"/>
<dbReference type="EMDB" id="EMD-17364"/>
<dbReference type="EMDB" id="EMD-17365"/>
<dbReference type="EMDB" id="EMD-3624"/>
<dbReference type="EMDB" id="EMD-3625"/>
<dbReference type="EMDB" id="EMD-4050"/>
<dbReference type="EMDB" id="EMD-8402"/>
<dbReference type="SMR" id="Q2FZ60"/>
<dbReference type="IntAct" id="Q2FZ60">
    <property type="interactions" value="1"/>
</dbReference>
<dbReference type="STRING" id="93061.SAOUHSC_01191"/>
<dbReference type="PaxDb" id="1280-SAXN108_1224"/>
<dbReference type="GeneID" id="3919324"/>
<dbReference type="GeneID" id="98345539"/>
<dbReference type="KEGG" id="sao:SAOUHSC_01191"/>
<dbReference type="PATRIC" id="fig|93061.5.peg.1094"/>
<dbReference type="eggNOG" id="COG0227">
    <property type="taxonomic scope" value="Bacteria"/>
</dbReference>
<dbReference type="HOGENOM" id="CLU_064548_7_1_9"/>
<dbReference type="OrthoDB" id="9805609at2"/>
<dbReference type="EvolutionaryTrace" id="Q2FZ60"/>
<dbReference type="PRO" id="PR:Q2FZ60"/>
<dbReference type="Proteomes" id="UP000008816">
    <property type="component" value="Chromosome"/>
</dbReference>
<dbReference type="GO" id="GO:1990904">
    <property type="term" value="C:ribonucleoprotein complex"/>
    <property type="evidence" value="ECO:0007669"/>
    <property type="project" value="UniProtKB-KW"/>
</dbReference>
<dbReference type="GO" id="GO:0005840">
    <property type="term" value="C:ribosome"/>
    <property type="evidence" value="ECO:0007669"/>
    <property type="project" value="UniProtKB-KW"/>
</dbReference>
<dbReference type="GO" id="GO:0003735">
    <property type="term" value="F:structural constituent of ribosome"/>
    <property type="evidence" value="ECO:0007669"/>
    <property type="project" value="InterPro"/>
</dbReference>
<dbReference type="GO" id="GO:0006412">
    <property type="term" value="P:translation"/>
    <property type="evidence" value="ECO:0007669"/>
    <property type="project" value="UniProtKB-UniRule"/>
</dbReference>
<dbReference type="Gene3D" id="2.30.170.40">
    <property type="entry name" value="Ribosomal protein L28/L24"/>
    <property type="match status" value="1"/>
</dbReference>
<dbReference type="HAMAP" id="MF_00373">
    <property type="entry name" value="Ribosomal_bL28"/>
    <property type="match status" value="1"/>
</dbReference>
<dbReference type="InterPro" id="IPR050096">
    <property type="entry name" value="Bacterial_rp_bL28"/>
</dbReference>
<dbReference type="InterPro" id="IPR026569">
    <property type="entry name" value="Ribosomal_bL28"/>
</dbReference>
<dbReference type="InterPro" id="IPR034704">
    <property type="entry name" value="Ribosomal_bL28/bL31-like_sf"/>
</dbReference>
<dbReference type="InterPro" id="IPR001383">
    <property type="entry name" value="Ribosomal_bL28_bact-type"/>
</dbReference>
<dbReference type="InterPro" id="IPR037147">
    <property type="entry name" value="Ribosomal_bL28_sf"/>
</dbReference>
<dbReference type="NCBIfam" id="TIGR00009">
    <property type="entry name" value="L28"/>
    <property type="match status" value="1"/>
</dbReference>
<dbReference type="PANTHER" id="PTHR39080">
    <property type="entry name" value="50S RIBOSOMAL PROTEIN L28"/>
    <property type="match status" value="1"/>
</dbReference>
<dbReference type="PANTHER" id="PTHR39080:SF1">
    <property type="entry name" value="LARGE RIBOSOMAL SUBUNIT PROTEIN BL28A"/>
    <property type="match status" value="1"/>
</dbReference>
<dbReference type="Pfam" id="PF00830">
    <property type="entry name" value="Ribosomal_L28"/>
    <property type="match status" value="1"/>
</dbReference>
<dbReference type="SUPFAM" id="SSF143800">
    <property type="entry name" value="L28p-like"/>
    <property type="match status" value="1"/>
</dbReference>
<name>RL28_STAA8</name>